<reference key="1">
    <citation type="submission" date="2007-03" db="EMBL/GenBank/DDBJ databases">
        <title>Sequencing analysis of Arabis hirsuta chloroplast DNA.</title>
        <authorList>
            <person name="Hosouchi T."/>
            <person name="Tsuruoka H."/>
            <person name="Kotani H."/>
        </authorList>
    </citation>
    <scope>NUCLEOTIDE SEQUENCE [LARGE SCALE GENOMIC DNA]</scope>
</reference>
<evidence type="ECO:0000255" key="1">
    <source>
        <dbReference type="HAMAP-Rule" id="MF_00059"/>
    </source>
</evidence>
<geneLocation type="chloroplast"/>
<organism>
    <name type="scientific">Arabis hirsuta</name>
    <name type="common">Hairy rock-cress</name>
    <name type="synonym">Turritis hirsuta</name>
    <dbReference type="NCBI Taxonomy" id="78191"/>
    <lineage>
        <taxon>Eukaryota</taxon>
        <taxon>Viridiplantae</taxon>
        <taxon>Streptophyta</taxon>
        <taxon>Embryophyta</taxon>
        <taxon>Tracheophyta</taxon>
        <taxon>Spermatophyta</taxon>
        <taxon>Magnoliopsida</taxon>
        <taxon>eudicotyledons</taxon>
        <taxon>Gunneridae</taxon>
        <taxon>Pentapetalae</taxon>
        <taxon>rosids</taxon>
        <taxon>malvids</taxon>
        <taxon>Brassicales</taxon>
        <taxon>Brassicaceae</taxon>
        <taxon>Arabideae</taxon>
        <taxon>Arabis</taxon>
    </lineage>
</organism>
<name>RPOA_ARAHI</name>
<gene>
    <name evidence="1" type="primary">rpoA</name>
</gene>
<keyword id="KW-0150">Chloroplast</keyword>
<keyword id="KW-0240">DNA-directed RNA polymerase</keyword>
<keyword id="KW-0548">Nucleotidyltransferase</keyword>
<keyword id="KW-0934">Plastid</keyword>
<keyword id="KW-0804">Transcription</keyword>
<keyword id="KW-0808">Transferase</keyword>
<proteinExistence type="inferred from homology"/>
<protein>
    <recommendedName>
        <fullName evidence="1">DNA-directed RNA polymerase subunit alpha</fullName>
        <shortName evidence="1">PEP</shortName>
        <ecNumber evidence="1">2.7.7.6</ecNumber>
    </recommendedName>
    <alternativeName>
        <fullName evidence="1">Plastid-encoded RNA polymerase subunit alpha</fullName>
        <shortName evidence="1">RNA polymerase subunit alpha</shortName>
    </alternativeName>
</protein>
<feature type="chain" id="PRO_0000296886" description="DNA-directed RNA polymerase subunit alpha">
    <location>
        <begin position="1"/>
        <end position="337"/>
    </location>
</feature>
<feature type="region of interest" description="Alpha N-terminal domain (alpha-NTD)" evidence="1">
    <location>
        <begin position="1"/>
        <end position="233"/>
    </location>
</feature>
<feature type="region of interest" description="Alpha C-terminal domain (alpha-CTD)" evidence="1">
    <location>
        <begin position="267"/>
        <end position="337"/>
    </location>
</feature>
<accession>A4QK50</accession>
<comment type="function">
    <text evidence="1">DNA-dependent RNA polymerase catalyzes the transcription of DNA into RNA using the four ribonucleoside triphosphates as substrates.</text>
</comment>
<comment type="catalytic activity">
    <reaction evidence="1">
        <text>RNA(n) + a ribonucleoside 5'-triphosphate = RNA(n+1) + diphosphate</text>
        <dbReference type="Rhea" id="RHEA:21248"/>
        <dbReference type="Rhea" id="RHEA-COMP:14527"/>
        <dbReference type="Rhea" id="RHEA-COMP:17342"/>
        <dbReference type="ChEBI" id="CHEBI:33019"/>
        <dbReference type="ChEBI" id="CHEBI:61557"/>
        <dbReference type="ChEBI" id="CHEBI:140395"/>
        <dbReference type="EC" id="2.7.7.6"/>
    </reaction>
</comment>
<comment type="subunit">
    <text evidence="1">In plastids the minimal PEP RNA polymerase catalytic core is composed of four subunits: alpha, beta, beta', and beta''. When a (nuclear-encoded) sigma factor is associated with the core the holoenzyme is formed, which can initiate transcription.</text>
</comment>
<comment type="subcellular location">
    <subcellularLocation>
        <location>Plastid</location>
        <location>Chloroplast</location>
    </subcellularLocation>
</comment>
<comment type="domain">
    <text evidence="1">The N-terminal domain is essential for RNAP assembly and basal transcription, whereas the C-terminal domain is involved in interaction with transcriptional regulators and with upstream promoter elements.</text>
</comment>
<comment type="similarity">
    <text evidence="1">Belongs to the RNA polymerase alpha chain family.</text>
</comment>
<dbReference type="EC" id="2.7.7.6" evidence="1"/>
<dbReference type="EMBL" id="AP009369">
    <property type="protein sequence ID" value="BAF50055.1"/>
    <property type="molecule type" value="Genomic_DNA"/>
</dbReference>
<dbReference type="RefSeq" id="YP_001123231.1">
    <property type="nucleotide sequence ID" value="NC_009268.1"/>
</dbReference>
<dbReference type="SMR" id="A4QK50"/>
<dbReference type="GeneID" id="4962523"/>
<dbReference type="GO" id="GO:0009507">
    <property type="term" value="C:chloroplast"/>
    <property type="evidence" value="ECO:0007669"/>
    <property type="project" value="UniProtKB-SubCell"/>
</dbReference>
<dbReference type="GO" id="GO:0000428">
    <property type="term" value="C:DNA-directed RNA polymerase complex"/>
    <property type="evidence" value="ECO:0007669"/>
    <property type="project" value="UniProtKB-KW"/>
</dbReference>
<dbReference type="GO" id="GO:0005739">
    <property type="term" value="C:mitochondrion"/>
    <property type="evidence" value="ECO:0007669"/>
    <property type="project" value="GOC"/>
</dbReference>
<dbReference type="GO" id="GO:0003677">
    <property type="term" value="F:DNA binding"/>
    <property type="evidence" value="ECO:0007669"/>
    <property type="project" value="UniProtKB-UniRule"/>
</dbReference>
<dbReference type="GO" id="GO:0003899">
    <property type="term" value="F:DNA-directed RNA polymerase activity"/>
    <property type="evidence" value="ECO:0007669"/>
    <property type="project" value="UniProtKB-UniRule"/>
</dbReference>
<dbReference type="GO" id="GO:0046983">
    <property type="term" value="F:protein dimerization activity"/>
    <property type="evidence" value="ECO:0007669"/>
    <property type="project" value="InterPro"/>
</dbReference>
<dbReference type="GO" id="GO:0006351">
    <property type="term" value="P:DNA-templated transcription"/>
    <property type="evidence" value="ECO:0007669"/>
    <property type="project" value="UniProtKB-UniRule"/>
</dbReference>
<dbReference type="CDD" id="cd06928">
    <property type="entry name" value="RNAP_alpha_NTD"/>
    <property type="match status" value="1"/>
</dbReference>
<dbReference type="FunFam" id="1.10.150.20:FF:000021">
    <property type="entry name" value="DNA-directed RNA polymerase subunit alpha"/>
    <property type="match status" value="1"/>
</dbReference>
<dbReference type="FunFam" id="2.170.120.12:FF:000001">
    <property type="entry name" value="DNA-directed RNA polymerase subunit alpha"/>
    <property type="match status" value="1"/>
</dbReference>
<dbReference type="FunFam" id="3.30.1360.10:FF:000039">
    <property type="entry name" value="DNA-directed RNA polymerase subunit alpha"/>
    <property type="match status" value="1"/>
</dbReference>
<dbReference type="Gene3D" id="1.10.150.20">
    <property type="entry name" value="5' to 3' exonuclease, C-terminal subdomain"/>
    <property type="match status" value="1"/>
</dbReference>
<dbReference type="Gene3D" id="2.170.120.12">
    <property type="entry name" value="DNA-directed RNA polymerase, insert domain"/>
    <property type="match status" value="1"/>
</dbReference>
<dbReference type="Gene3D" id="3.30.1360.10">
    <property type="entry name" value="RNA polymerase, RBP11-like subunit"/>
    <property type="match status" value="1"/>
</dbReference>
<dbReference type="HAMAP" id="MF_00059">
    <property type="entry name" value="RNApol_bact_RpoA"/>
    <property type="match status" value="1"/>
</dbReference>
<dbReference type="InterPro" id="IPR011262">
    <property type="entry name" value="DNA-dir_RNA_pol_insert"/>
</dbReference>
<dbReference type="InterPro" id="IPR011263">
    <property type="entry name" value="DNA-dir_RNA_pol_RpoA/D/Rpb3"/>
</dbReference>
<dbReference type="InterPro" id="IPR011773">
    <property type="entry name" value="DNA-dir_RpoA"/>
</dbReference>
<dbReference type="InterPro" id="IPR036603">
    <property type="entry name" value="RBP11-like"/>
</dbReference>
<dbReference type="InterPro" id="IPR011260">
    <property type="entry name" value="RNAP_asu_C"/>
</dbReference>
<dbReference type="InterPro" id="IPR036643">
    <property type="entry name" value="RNApol_insert_sf"/>
</dbReference>
<dbReference type="NCBIfam" id="TIGR02027">
    <property type="entry name" value="rpoA"/>
    <property type="match status" value="1"/>
</dbReference>
<dbReference type="Pfam" id="PF01000">
    <property type="entry name" value="RNA_pol_A_bac"/>
    <property type="match status" value="1"/>
</dbReference>
<dbReference type="Pfam" id="PF03118">
    <property type="entry name" value="RNA_pol_A_CTD"/>
    <property type="match status" value="1"/>
</dbReference>
<dbReference type="Pfam" id="PF01193">
    <property type="entry name" value="RNA_pol_L"/>
    <property type="match status" value="1"/>
</dbReference>
<dbReference type="SMART" id="SM00662">
    <property type="entry name" value="RPOLD"/>
    <property type="match status" value="1"/>
</dbReference>
<dbReference type="SUPFAM" id="SSF47789">
    <property type="entry name" value="C-terminal domain of RNA polymerase alpha subunit"/>
    <property type="match status" value="1"/>
</dbReference>
<dbReference type="SUPFAM" id="SSF56553">
    <property type="entry name" value="Insert subdomain of RNA polymerase alpha subunit"/>
    <property type="match status" value="1"/>
</dbReference>
<dbReference type="SUPFAM" id="SSF55257">
    <property type="entry name" value="RBP11-like subunits of RNA polymerase"/>
    <property type="match status" value="1"/>
</dbReference>
<sequence length="337" mass="39009">MVREKVKVSTRTLQWRCVESRRDSKRLYYGRFILSPLMKGQADTIGIAMRRALLGEIEGTCITRAKSENIPHDYSNIVGIQESVHEILMNLNEIVLRSNLYGARNAIICVQGPGYITARDIILPPSVEIIDNTQHIATLTESIDLCIGLKIERNRGYSLKILNTFEDRSYPIDAVFMPVQNANHSIHSYGNGNGKQEILFLEIWTNGSLTPKEALHEASRNLINLFIPFLHVEEETFYLENNQHHVTLPLFPFHNRLVNLRKKKKELAFQYIFIDQLELPPRIYNCLKKSNIHTLLDLLNNSQEDLIKIEHFHIEDVKKILDILEKKIEKAFQKKID</sequence>